<gene>
    <name evidence="3" type="primary">ddhC</name>
    <name evidence="6" type="ordered locus">Csal_0990</name>
</gene>
<proteinExistence type="evidence at protein level"/>
<comment type="function">
    <text evidence="1 2">Involved in degradation of glycine betaine (PubMed:32631860). Catalyzes the demethylation of both N,N-dimethylglycine (DMG) and sarcosine, releasing formaldehyde and forming glycine as the final product (PubMed:32631860). Does not show activity toward trimethylamine (TMA), histamine, glycine betaine (GB) or choline (PubMed:22675587). The C-N bond in DMG is probably oxidized by removal of a hydride equivalent to form a labile imine intermediate, which is then spontaneously hydrolyzed in the presence of water, producing sarcosine and formaldehyde (PubMed:32631860). The two protons subtracted from DMG are transferred to the non-covalently bound FAD, resulting in the reduced form of FAD, which is subsequently reoxidized by coupling with reduction of the enzyme-bound NAD(P)(+) (PubMed:32631860). Regeneration of NAD(P)(+) is achieved by electron transfer to the [4Fe-4S] cluster in the probable membrane-anchored ferredoxin csal_0991 (PubMed:32631860).</text>
</comment>
<comment type="catalytic activity">
    <reaction evidence="2">
        <text>oxidized 2[4Fe-4S]-[ferredoxin] + N,N-dimethylglycine + H2O = reduced 2[4Fe-4S]-[ferredoxin] + sarcosine + formaldehyde + 2 H(+)</text>
        <dbReference type="Rhea" id="RHEA:74167"/>
        <dbReference type="Rhea" id="RHEA-COMP:10002"/>
        <dbReference type="Rhea" id="RHEA-COMP:10004"/>
        <dbReference type="ChEBI" id="CHEBI:15377"/>
        <dbReference type="ChEBI" id="CHEBI:15378"/>
        <dbReference type="ChEBI" id="CHEBI:16842"/>
        <dbReference type="ChEBI" id="CHEBI:33722"/>
        <dbReference type="ChEBI" id="CHEBI:33723"/>
        <dbReference type="ChEBI" id="CHEBI:57433"/>
        <dbReference type="ChEBI" id="CHEBI:58251"/>
        <dbReference type="EC" id="1.5.7.3"/>
    </reaction>
    <physiologicalReaction direction="left-to-right" evidence="2">
        <dbReference type="Rhea" id="RHEA:74168"/>
    </physiologicalReaction>
</comment>
<comment type="catalytic activity">
    <reaction evidence="2">
        <text>oxidized 2[4Fe-4S]-[ferredoxin] + sarcosine + H2O = reduced 2[4Fe-4S]-[ferredoxin] + formaldehyde + glycine + 2 H(+)</text>
        <dbReference type="Rhea" id="RHEA:74155"/>
        <dbReference type="Rhea" id="RHEA-COMP:10002"/>
        <dbReference type="Rhea" id="RHEA-COMP:10004"/>
        <dbReference type="ChEBI" id="CHEBI:15377"/>
        <dbReference type="ChEBI" id="CHEBI:15378"/>
        <dbReference type="ChEBI" id="CHEBI:16842"/>
        <dbReference type="ChEBI" id="CHEBI:33722"/>
        <dbReference type="ChEBI" id="CHEBI:33723"/>
        <dbReference type="ChEBI" id="CHEBI:57305"/>
        <dbReference type="ChEBI" id="CHEBI:57433"/>
        <dbReference type="EC" id="1.5.7.3"/>
    </reaction>
    <physiologicalReaction direction="left-to-right" evidence="2">
        <dbReference type="Rhea" id="RHEA:74156"/>
    </physiologicalReaction>
</comment>
<comment type="cofactor">
    <cofactor evidence="2">
        <name>FAD</name>
        <dbReference type="ChEBI" id="CHEBI:57692"/>
    </cofactor>
</comment>
<comment type="cofactor">
    <cofactor evidence="2">
        <name>NAD(+)</name>
        <dbReference type="ChEBI" id="CHEBI:57540"/>
    </cofactor>
    <cofactor evidence="2">
        <name>NADP(+)</name>
        <dbReference type="ChEBI" id="CHEBI:58349"/>
    </cofactor>
    <text evidence="2">Can use both NAD(+) and NADP(+), with a preference for NAD(+).</text>
</comment>
<comment type="activity regulation">
    <text evidence="2">Ca(2+) increases the activity by 12%, while the other metal ions tested have no or slightly inhibitory effects (PubMed:32631860). The chelating agent EDTA inhibits the activity by 33% (PubMed:32631860).</text>
</comment>
<comment type="biophysicochemical properties">
    <kinetics>
        <KM evidence="2">8.61 mM for DMG</KM>
        <KM evidence="2">14.85 mM for sarcosine</KM>
        <KM evidence="2">0.81 mM for NAD(+)</KM>
        <KM evidence="2">3.21 mM for NADP(+)</KM>
        <Vmax evidence="2">0.048 umol/min/mg enzyme with DMG as substrate</Vmax>
        <Vmax evidence="2">0.043 umol/min/mg enzyme with sarcosine as substrate</Vmax>
        <Vmax evidence="2">0.031 umol/min/mg enzyme with NAD(+) as substrate</Vmax>
        <Vmax evidence="2">0.021 umol/min/mg enzyme with NADP(+) as substrate</Vmax>
        <text evidence="2">kcat is 0.312 sec(-1) with DMG as substrate. kcat is 0.280 sec(-1) with sarcosine as substrate. kcat is 0.202 sec(-1) with NAD(+) as substrate. kcat is 0.136 sec(-1) with NADP(+) as substrate.</text>
    </kinetics>
    <phDependence>
        <text evidence="2">Optimum pH is 7.0.</text>
    </phDependence>
    <temperatureDependence>
        <text evidence="2">Optimum temperature is 60 degrees Celsius.</text>
    </temperatureDependence>
</comment>
<comment type="subunit">
    <text evidence="2">Monomer (PubMed:32631860). The purified enzyme exists in the form of a monomer, dimer or polymer under non-denaturing conditions, but only the monomeric protein exhibits enzyme activity (PubMed:32631860).</text>
</comment>
<comment type="subcellular location">
    <subcellularLocation>
        <location evidence="5">Cytoplasm</location>
    </subcellularLocation>
</comment>
<comment type="disruption phenotype">
    <text evidence="2">Disruption mutant loses its ability to grow using DMG as the sole nitrogen source but is still capable of utilizing sarcosine and glycine as the sole nitrogen source.</text>
</comment>
<comment type="similarity">
    <text evidence="4">In the N-terminal section; belongs to the NADH:flavin oxidoreductase/NADH oxidase family.</text>
</comment>
<name>DDHC_CHRSD</name>
<organism>
    <name type="scientific">Chromohalobacter salexigens (strain ATCC BAA-138 / DSM 3043 / CIP 106854 / NCIMB 13768 / 1H11)</name>
    <dbReference type="NCBI Taxonomy" id="290398"/>
    <lineage>
        <taxon>Bacteria</taxon>
        <taxon>Pseudomonadati</taxon>
        <taxon>Pseudomonadota</taxon>
        <taxon>Gammaproteobacteria</taxon>
        <taxon>Oceanospirillales</taxon>
        <taxon>Halomonadaceae</taxon>
        <taxon>Chromohalobacter</taxon>
    </lineage>
</organism>
<reference key="1">
    <citation type="journal article" date="2011" name="Stand. Genomic Sci.">
        <title>Complete genome sequence of the halophilic and highly halotolerant Chromohalobacter salexigens type strain (1H11(T)).</title>
        <authorList>
            <person name="Copeland A."/>
            <person name="O'Connor K."/>
            <person name="Lucas S."/>
            <person name="Lapidus A."/>
            <person name="Berry K.W."/>
            <person name="Detter J.C."/>
            <person name="Del Rio T.G."/>
            <person name="Hammon N."/>
            <person name="Dalin E."/>
            <person name="Tice H."/>
            <person name="Pitluck S."/>
            <person name="Bruce D."/>
            <person name="Goodwin L."/>
            <person name="Han C."/>
            <person name="Tapia R."/>
            <person name="Saunders E."/>
            <person name="Schmutz J."/>
            <person name="Brettin T."/>
            <person name="Larimer F."/>
            <person name="Land M."/>
            <person name="Hauser L."/>
            <person name="Vargas C."/>
            <person name="Nieto J.J."/>
            <person name="Kyrpides N.C."/>
            <person name="Ivanova N."/>
            <person name="Goker M."/>
            <person name="Klenk H.P."/>
            <person name="Csonka L.N."/>
            <person name="Woyke T."/>
        </authorList>
    </citation>
    <scope>NUCLEOTIDE SEQUENCE [LARGE SCALE GENOMIC DNA]</scope>
    <source>
        <strain>ATCC BAA-138 / DSM 3043 / CIP 106854 / NCIMB 13768 / 1H11</strain>
    </source>
</reference>
<reference key="2">
    <citation type="journal article" date="2020" name="Appl. Environ. Microbiol.">
        <title>Role of N,N-dimethylglycine and its catabolism to sarcosine in Chromohalobacter salexigens DSM 3043.</title>
        <authorList>
            <person name="Yang T."/>
            <person name="Shao Y.H."/>
            <person name="Guo L.Z."/>
            <person name="Meng X.L."/>
            <person name="Yu H."/>
            <person name="Lu W.D."/>
        </authorList>
    </citation>
    <scope>FUNCTION</scope>
    <scope>CATALYTIC ACTIVITY</scope>
    <scope>PROPOSED REACTION MECHANISM</scope>
    <scope>COFACTOR</scope>
    <scope>ACTIVITY REGULATION</scope>
    <scope>BIOPHYSICOCHEMICAL PROPERTIES</scope>
    <scope>SUBUNIT</scope>
    <scope>DISRUPTION PHENOTYPE</scope>
    <source>
        <strain>ATCC BAA-138 / DSM 3043 / CIP 106854 / NCIMB 13768 / 1H11</strain>
    </source>
</reference>
<sequence>MAFDALFKPIEIGNLTIRNRVVSTAHAEVHATDGGMTTERYVKYYEEKAKGGCGLCICGGSSPVSIDSPQAWWSSVNISTDRIIPHFQNLADAVHKHGGKIMIQITHMGRRSRWDGFDWPTLLSPSGIREPVHRSTCKTIEEEEIWRVIDDFAQGARRVKEGGLDGIELSAVHQHLIDQFWSPRVNKREDQWGGSFENRMRFGLEVLKAVRAEVGDDFVVGLRICGDEFHPDGLTHDDMKRIAAYYDATGMVDFFGVVGSGCDTHNTLANVIPNMSYPPEPFLHLAAGVKDVVSVPVIHAQNIKDPNQASRILEGGYVDLVGMTRAHIADPHLIAKIQMDQTDRIRQCVGANYCIDRQYQGLDVLCIQNAATSREYLGLPHEIAPSDGPKRKVVVVGGGPGGMEAARVAAERGHEVTLFEAADQIGGQITLAAKAPQRDQIAGITRWYQLELARLKVDLRLGTRADEATIADLRPDIVVLATGGQPFLSQVPEWGYDEDRERSLVVSTWDILSGAVEPGKNVLIFDSICEFAGVSAADYLADKGATVEIVTDDIKPGAAVGGTTFPTYYRSLYEKEVIMTSDLALHRVYREGDALVAVLENEYTGAQEERVVDQVVVENGVRPDEALYYALKDQSRNKGQVDIEALYAIQPQPALATLDDDADAGFVLFRLGDCTAPRNTHAAIYDALRICKDF</sequence>
<dbReference type="EC" id="1.5.7.3" evidence="2"/>
<dbReference type="EMBL" id="CP000285">
    <property type="protein sequence ID" value="ABE58347.1"/>
    <property type="molecule type" value="Genomic_DNA"/>
</dbReference>
<dbReference type="RefSeq" id="WP_011506293.1">
    <property type="nucleotide sequence ID" value="NC_007963.1"/>
</dbReference>
<dbReference type="SMR" id="Q1QYW1"/>
<dbReference type="STRING" id="290398.Csal_0990"/>
<dbReference type="GeneID" id="95333745"/>
<dbReference type="KEGG" id="csa:Csal_0990"/>
<dbReference type="eggNOG" id="COG0446">
    <property type="taxonomic scope" value="Bacteria"/>
</dbReference>
<dbReference type="eggNOG" id="COG1902">
    <property type="taxonomic scope" value="Bacteria"/>
</dbReference>
<dbReference type="HOGENOM" id="CLU_012153_1_2_6"/>
<dbReference type="OrthoDB" id="8523426at2"/>
<dbReference type="BioCyc" id="MetaCyc:MONOMER-21837"/>
<dbReference type="Proteomes" id="UP000000239">
    <property type="component" value="Chromosome"/>
</dbReference>
<dbReference type="GO" id="GO:0005737">
    <property type="term" value="C:cytoplasm"/>
    <property type="evidence" value="ECO:0007669"/>
    <property type="project" value="UniProtKB-SubCell"/>
</dbReference>
<dbReference type="GO" id="GO:0010181">
    <property type="term" value="F:FMN binding"/>
    <property type="evidence" value="ECO:0007669"/>
    <property type="project" value="InterPro"/>
</dbReference>
<dbReference type="GO" id="GO:0016491">
    <property type="term" value="F:oxidoreductase activity"/>
    <property type="evidence" value="ECO:0007669"/>
    <property type="project" value="UniProtKB-KW"/>
</dbReference>
<dbReference type="CDD" id="cd04734">
    <property type="entry name" value="OYE_like_3_FMN"/>
    <property type="match status" value="1"/>
</dbReference>
<dbReference type="FunFam" id="3.20.20.70:FF:000102">
    <property type="entry name" value="Putative N-methylproline demethylase"/>
    <property type="match status" value="1"/>
</dbReference>
<dbReference type="Gene3D" id="3.20.20.70">
    <property type="entry name" value="Aldolase class I"/>
    <property type="match status" value="1"/>
</dbReference>
<dbReference type="Gene3D" id="3.50.50.60">
    <property type="entry name" value="FAD/NAD(P)-binding domain"/>
    <property type="match status" value="1"/>
</dbReference>
<dbReference type="Gene3D" id="3.40.50.720">
    <property type="entry name" value="NAD(P)-binding Rossmann-like Domain"/>
    <property type="match status" value="1"/>
</dbReference>
<dbReference type="InterPro" id="IPR013785">
    <property type="entry name" value="Aldolase_TIM"/>
</dbReference>
<dbReference type="InterPro" id="IPR036188">
    <property type="entry name" value="FAD/NAD-bd_sf"/>
</dbReference>
<dbReference type="InterPro" id="IPR023753">
    <property type="entry name" value="FAD/NAD-binding_dom"/>
</dbReference>
<dbReference type="InterPro" id="IPR051799">
    <property type="entry name" value="NADH_flavin_oxidoreductase"/>
</dbReference>
<dbReference type="InterPro" id="IPR001155">
    <property type="entry name" value="OxRdtase_FMN_N"/>
</dbReference>
<dbReference type="PANTHER" id="PTHR43656">
    <property type="entry name" value="BINDING OXIDOREDUCTASE, PUTATIVE (AFU_ORTHOLOGUE AFUA_2G08260)-RELATED"/>
    <property type="match status" value="1"/>
</dbReference>
<dbReference type="PANTHER" id="PTHR43656:SF2">
    <property type="entry name" value="BINDING OXIDOREDUCTASE, PUTATIVE (AFU_ORTHOLOGUE AFUA_2G08260)-RELATED"/>
    <property type="match status" value="1"/>
</dbReference>
<dbReference type="Pfam" id="PF00724">
    <property type="entry name" value="Oxidored_FMN"/>
    <property type="match status" value="1"/>
</dbReference>
<dbReference type="Pfam" id="PF07992">
    <property type="entry name" value="Pyr_redox_2"/>
    <property type="match status" value="1"/>
</dbReference>
<dbReference type="PRINTS" id="PR00368">
    <property type="entry name" value="FADPNR"/>
</dbReference>
<dbReference type="PRINTS" id="PR00411">
    <property type="entry name" value="PNDRDTASEI"/>
</dbReference>
<dbReference type="SUPFAM" id="SSF51905">
    <property type="entry name" value="FAD/NAD(P)-binding domain"/>
    <property type="match status" value="1"/>
</dbReference>
<dbReference type="SUPFAM" id="SSF51395">
    <property type="entry name" value="FMN-linked oxidoreductases"/>
    <property type="match status" value="1"/>
</dbReference>
<feature type="chain" id="PRO_0000459076" description="N,N-dimethylglycine/sarcosine dehydrogenase">
    <location>
        <begin position="1"/>
        <end position="694"/>
    </location>
</feature>
<keyword id="KW-0963">Cytoplasm</keyword>
<keyword id="KW-0274">FAD</keyword>
<keyword id="KW-0285">Flavoprotein</keyword>
<keyword id="KW-0520">NAD</keyword>
<keyword id="KW-0521">NADP</keyword>
<keyword id="KW-0560">Oxidoreductase</keyword>
<keyword id="KW-1185">Reference proteome</keyword>
<accession>Q1QYW1</accession>
<evidence type="ECO:0000269" key="1">
    <source>
    </source>
</evidence>
<evidence type="ECO:0000269" key="2">
    <source>
    </source>
</evidence>
<evidence type="ECO:0000303" key="3">
    <source>
    </source>
</evidence>
<evidence type="ECO:0000305" key="4"/>
<evidence type="ECO:0000305" key="5">
    <source>
    </source>
</evidence>
<evidence type="ECO:0000312" key="6">
    <source>
        <dbReference type="EMBL" id="ABE58347.1"/>
    </source>
</evidence>
<protein>
    <recommendedName>
        <fullName evidence="4">N,N-dimethylglycine/sarcosine dehydrogenase</fullName>
        <ecNumber evidence="2">1.5.7.3</ecNumber>
    </recommendedName>
    <alternativeName>
        <fullName evidence="3">N,N-dimethylglycine dehydrogenase</fullName>
        <shortName evidence="3">DMG dehydrogenase</shortName>
        <shortName evidence="3">DMGDH</shortName>
    </alternativeName>
</protein>